<dbReference type="EMBL" id="AABR03068405">
    <property type="status" value="NOT_ANNOTATED_CDS"/>
    <property type="molecule type" value="Genomic_DNA"/>
</dbReference>
<dbReference type="EMBL" id="AABR03070740">
    <property type="status" value="NOT_ANNOTATED_CDS"/>
    <property type="molecule type" value="Genomic_DNA"/>
</dbReference>
<dbReference type="EMBL" id="AABR03072061">
    <property type="status" value="NOT_ANNOTATED_CDS"/>
    <property type="molecule type" value="Genomic_DNA"/>
</dbReference>
<dbReference type="EMBL" id="AABR03071930">
    <property type="status" value="NOT_ANNOTATED_CDS"/>
    <property type="molecule type" value="Genomic_DNA"/>
</dbReference>
<dbReference type="EMBL" id="AABR03071936">
    <property type="status" value="NOT_ANNOTATED_CDS"/>
    <property type="molecule type" value="Genomic_DNA"/>
</dbReference>
<dbReference type="EMBL" id="AABR03069799">
    <property type="status" value="NOT_ANNOTATED_CDS"/>
    <property type="molecule type" value="Genomic_DNA"/>
</dbReference>
<dbReference type="EMBL" id="AABR03071512">
    <property type="status" value="NOT_ANNOTATED_CDS"/>
    <property type="molecule type" value="Genomic_DNA"/>
</dbReference>
<dbReference type="EMBL" id="AABR03068568">
    <property type="status" value="NOT_ANNOTATED_CDS"/>
    <property type="molecule type" value="Genomic_DNA"/>
</dbReference>
<dbReference type="SMR" id="P0C6C0"/>
<dbReference type="FunCoup" id="P0C6C0">
    <property type="interactions" value="81"/>
</dbReference>
<dbReference type="IntAct" id="P0C6C0">
    <property type="interactions" value="1"/>
</dbReference>
<dbReference type="STRING" id="10116.ENSRNOP00000022281"/>
<dbReference type="GlyGen" id="P0C6C0">
    <property type="glycosylation" value="1 site"/>
</dbReference>
<dbReference type="iPTMnet" id="P0C6C0"/>
<dbReference type="PhosphoSitePlus" id="P0C6C0"/>
<dbReference type="PaxDb" id="10116-ENSRNOP00000022281"/>
<dbReference type="UCSC" id="RGD:1311951">
    <property type="organism name" value="rat"/>
</dbReference>
<dbReference type="AGR" id="RGD:1311951"/>
<dbReference type="RGD" id="1311951">
    <property type="gene designation" value="Sphkap"/>
</dbReference>
<dbReference type="eggNOG" id="ENOG502QQ6Q">
    <property type="taxonomic scope" value="Eukaryota"/>
</dbReference>
<dbReference type="InParanoid" id="P0C6C0"/>
<dbReference type="PhylomeDB" id="P0C6C0"/>
<dbReference type="PRO" id="PR:P0C6C0"/>
<dbReference type="Proteomes" id="UP000002494">
    <property type="component" value="Unplaced"/>
</dbReference>
<dbReference type="GO" id="GO:0005737">
    <property type="term" value="C:cytoplasm"/>
    <property type="evidence" value="ECO:0000318"/>
    <property type="project" value="GO_Central"/>
</dbReference>
<dbReference type="GO" id="GO:0005739">
    <property type="term" value="C:mitochondrion"/>
    <property type="evidence" value="ECO:0000266"/>
    <property type="project" value="RGD"/>
</dbReference>
<dbReference type="GO" id="GO:0030018">
    <property type="term" value="C:Z disc"/>
    <property type="evidence" value="ECO:0000266"/>
    <property type="project" value="RGD"/>
</dbReference>
<dbReference type="GO" id="GO:0051018">
    <property type="term" value="F:protein kinase A binding"/>
    <property type="evidence" value="ECO:0000266"/>
    <property type="project" value="RGD"/>
</dbReference>
<dbReference type="InterPro" id="IPR018292">
    <property type="entry name" value="AKAP_110_C"/>
</dbReference>
<dbReference type="InterPro" id="IPR008382">
    <property type="entry name" value="SPHK1-interactor_AKAP_110"/>
</dbReference>
<dbReference type="PANTHER" id="PTHR10226">
    <property type="entry name" value="A KINASE ANCHOR PROTEIN"/>
    <property type="match status" value="1"/>
</dbReference>
<dbReference type="PANTHER" id="PTHR10226:SF7">
    <property type="entry name" value="A-KINASE ANCHOR PROTEIN SPHKAP"/>
    <property type="match status" value="1"/>
</dbReference>
<dbReference type="Pfam" id="PF05716">
    <property type="entry name" value="AKAP_110"/>
    <property type="match status" value="1"/>
</dbReference>
<sequence length="1683" mass="184451">MDVNSRLSVQSNVESPLMPEDSEPQQITSSAAGSLAGSITACKKVLRSNSLLESTDYWLQNQRTPCQIGFVEDESENCASVCFVNLDVNKDGCSTENLQQKLVNVSPDLPKLINSMNVQKPKENEIVLLSGLASGNRQADFDVSQCPWLPDICLVQCARGNRPNSTNCIIFEINKFLIGLEVVQERQLHLETSVLKLEDDTNCSLSSIEEDFLTASEHLEEEIEVEDCKSGLETINVSANVLESKRPKEATQEGWDYHKEILHCALGEKHIRKHRMPSMKTERSKENTAENTALQSLNPSARPSRLKSEVAGSKQPATNYSYPENIRGEIETSQMLFIPRDAYLSMVSSCGVLTEQGSNHRDHDATPNSLPPVQNGEATAGEYATNLAESVMQDAFIRLSQSQPTLPQESAVSFSVGSALLPSGCCTKDMVVPRSWNELPKIVIVQSPEGSDTAPEPSVSSWPDLEVSVETPGIFSEESSSRPTQSALEVALACAATVIGTTSSPQATERFTMEQESLVSTYTQRGNGIQQTPVPRVFMGPSTTEYSFPSALCGMTQVASAVAVCGLGEREEVTYSVAPSDLLPTPGASEERSSIGSLVTEESTELGKEAIAEALLREATLVLARPNAYSSVGELLESVNRRIIETTSKTQMLCTENVRRNELAHTLSNVILKHSIDELHQKNIMAHPTEERHPGGTLNTLMESVNQLLHNVMCFTFRKMNHIVTLGEHPSFDKAAGHAWVKASACSSSHPSSNAHGTGLVIRDLVEDASPKPDKGGARPELVNNPRLQSEFSCSHRMLDSTARTFPKEMYPKGIVGEDTRNPLHTLSYDSSEQRTSTDIGKLTTVGEVRSTFQESEDSIVPKAQEKHTCATTLNNEAQINLSLLGDDLVVPDQSTLEAKQSEVYGITNFAEELAETVVSMATEIAAICLDNSHGKQPWFCAWKRGNEFLMTPNASCRSLKRKKENSGTGSTVRKHKPPRLSEIKRKADEHPELKEKLMNRVMDESMNLEDIPDSVSTFANEVAAKIMNLTEFSTVDGVWQTQSCSRNRLLGGDRWNRLKASSCESIPEEDSEARVFVNSLGLMSTLSQPVSRASSVSKQSSCESITDEFSRFMVKQMENEGRGFELLLDYYAGKNASSILNSAIQQACQKNDHLNVRPSCPSKQSSTESITEEFYKYMLRDIAKENKDGALSRRSSHDWSTGLLSPSARSPLCYRQSSMPDSRSPCSRLTVNAPIKANSLDGFAQNCPQDSINVQPVSRASSSGLCKSDSCLYRRSGTDQITNMLIHETWASSIEALMRKNKIIADDGEAANASPGPVSGGSPSQVEKCANRLVTGTGHKGPALLVQESVDYQRKDAVTEGNCSPVSSPSKMAPVKKPSGFDPTRETSACHNAVALKSPRRSLCSREVPLIQIETDQKEECVGESETLLPQSGSLEEAEGPQPEETIPDVARSEDTALSACQSSQDSLETREELEVDVLKEDITLDESRNPPSSSEESTGSWSQLANEEDNPDDTSSFLQLSERSMSNGNTSGTSSLGIMDLDIYQESIPSSPMINELVEEKEILKEQSESVKERASGLPGRAASPQRSLLVINFDLEPECPDAELRATLQWIAASELGIPTIYFKKSQESRIEKFLDVVKLVHQKSWKVGDIFHAVVQYCKMHAEQKEGTPSLFDWLLELG</sequence>
<reference key="1">
    <citation type="journal article" date="2004" name="Nature">
        <title>Genome sequence of the Brown Norway rat yields insights into mammalian evolution.</title>
        <authorList>
            <person name="Gibbs R.A."/>
            <person name="Weinstock G.M."/>
            <person name="Metzker M.L."/>
            <person name="Muzny D.M."/>
            <person name="Sodergren E.J."/>
            <person name="Scherer S."/>
            <person name="Scott G."/>
            <person name="Steffen D."/>
            <person name="Worley K.C."/>
            <person name="Burch P.E."/>
            <person name="Okwuonu G."/>
            <person name="Hines S."/>
            <person name="Lewis L."/>
            <person name="Deramo C."/>
            <person name="Delgado O."/>
            <person name="Dugan-Rocha S."/>
            <person name="Miner G."/>
            <person name="Morgan M."/>
            <person name="Hawes A."/>
            <person name="Gill R."/>
            <person name="Holt R.A."/>
            <person name="Adams M.D."/>
            <person name="Amanatides P.G."/>
            <person name="Baden-Tillson H."/>
            <person name="Barnstead M."/>
            <person name="Chin S."/>
            <person name="Evans C.A."/>
            <person name="Ferriera S."/>
            <person name="Fosler C."/>
            <person name="Glodek A."/>
            <person name="Gu Z."/>
            <person name="Jennings D."/>
            <person name="Kraft C.L."/>
            <person name="Nguyen T."/>
            <person name="Pfannkoch C.M."/>
            <person name="Sitter C."/>
            <person name="Sutton G.G."/>
            <person name="Venter J.C."/>
            <person name="Woodage T."/>
            <person name="Smith D."/>
            <person name="Lee H.-M."/>
            <person name="Gustafson E."/>
            <person name="Cahill P."/>
            <person name="Kana A."/>
            <person name="Doucette-Stamm L."/>
            <person name="Weinstock K."/>
            <person name="Fechtel K."/>
            <person name="Weiss R.B."/>
            <person name="Dunn D.M."/>
            <person name="Green E.D."/>
            <person name="Blakesley R.W."/>
            <person name="Bouffard G.G."/>
            <person name="De Jong P.J."/>
            <person name="Osoegawa K."/>
            <person name="Zhu B."/>
            <person name="Marra M."/>
            <person name="Schein J."/>
            <person name="Bosdet I."/>
            <person name="Fjell C."/>
            <person name="Jones S."/>
            <person name="Krzywinski M."/>
            <person name="Mathewson C."/>
            <person name="Siddiqui A."/>
            <person name="Wye N."/>
            <person name="McPherson J."/>
            <person name="Zhao S."/>
            <person name="Fraser C.M."/>
            <person name="Shetty J."/>
            <person name="Shatsman S."/>
            <person name="Geer K."/>
            <person name="Chen Y."/>
            <person name="Abramzon S."/>
            <person name="Nierman W.C."/>
            <person name="Havlak P.H."/>
            <person name="Chen R."/>
            <person name="Durbin K.J."/>
            <person name="Egan A."/>
            <person name="Ren Y."/>
            <person name="Song X.-Z."/>
            <person name="Li B."/>
            <person name="Liu Y."/>
            <person name="Qin X."/>
            <person name="Cawley S."/>
            <person name="Cooney A.J."/>
            <person name="D'Souza L.M."/>
            <person name="Martin K."/>
            <person name="Wu J.Q."/>
            <person name="Gonzalez-Garay M.L."/>
            <person name="Jackson A.R."/>
            <person name="Kalafus K.J."/>
            <person name="McLeod M.P."/>
            <person name="Milosavljevic A."/>
            <person name="Virk D."/>
            <person name="Volkov A."/>
            <person name="Wheeler D.A."/>
            <person name="Zhang Z."/>
            <person name="Bailey J.A."/>
            <person name="Eichler E.E."/>
            <person name="Tuzun E."/>
            <person name="Birney E."/>
            <person name="Mongin E."/>
            <person name="Ureta-Vidal A."/>
            <person name="Woodwark C."/>
            <person name="Zdobnov E."/>
            <person name="Bork P."/>
            <person name="Suyama M."/>
            <person name="Torrents D."/>
            <person name="Alexandersson M."/>
            <person name="Trask B.J."/>
            <person name="Young J.M."/>
            <person name="Huang H."/>
            <person name="Wang H."/>
            <person name="Xing H."/>
            <person name="Daniels S."/>
            <person name="Gietzen D."/>
            <person name="Schmidt J."/>
            <person name="Stevens K."/>
            <person name="Vitt U."/>
            <person name="Wingrove J."/>
            <person name="Camara F."/>
            <person name="Mar Alba M."/>
            <person name="Abril J.F."/>
            <person name="Guigo R."/>
            <person name="Smit A."/>
            <person name="Dubchak I."/>
            <person name="Rubin E.M."/>
            <person name="Couronne O."/>
            <person name="Poliakov A."/>
            <person name="Huebner N."/>
            <person name="Ganten D."/>
            <person name="Goesele C."/>
            <person name="Hummel O."/>
            <person name="Kreitler T."/>
            <person name="Lee Y.-A."/>
            <person name="Monti J."/>
            <person name="Schulz H."/>
            <person name="Zimdahl H."/>
            <person name="Himmelbauer H."/>
            <person name="Lehrach H."/>
            <person name="Jacob H.J."/>
            <person name="Bromberg S."/>
            <person name="Gullings-Handley J."/>
            <person name="Jensen-Seaman M.I."/>
            <person name="Kwitek A.E."/>
            <person name="Lazar J."/>
            <person name="Pasko D."/>
            <person name="Tonellato P.J."/>
            <person name="Twigger S."/>
            <person name="Ponting C.P."/>
            <person name="Duarte J.M."/>
            <person name="Rice S."/>
            <person name="Goodstadt L."/>
            <person name="Beatson S.A."/>
            <person name="Emes R.D."/>
            <person name="Winter E.E."/>
            <person name="Webber C."/>
            <person name="Brandt P."/>
            <person name="Nyakatura G."/>
            <person name="Adetobi M."/>
            <person name="Chiaromonte F."/>
            <person name="Elnitski L."/>
            <person name="Eswara P."/>
            <person name="Hardison R.C."/>
            <person name="Hou M."/>
            <person name="Kolbe D."/>
            <person name="Makova K."/>
            <person name="Miller W."/>
            <person name="Nekrutenko A."/>
            <person name="Riemer C."/>
            <person name="Schwartz S."/>
            <person name="Taylor J."/>
            <person name="Yang S."/>
            <person name="Zhang Y."/>
            <person name="Lindpaintner K."/>
            <person name="Andrews T.D."/>
            <person name="Caccamo M."/>
            <person name="Clamp M."/>
            <person name="Clarke L."/>
            <person name="Curwen V."/>
            <person name="Durbin R.M."/>
            <person name="Eyras E."/>
            <person name="Searle S.M."/>
            <person name="Cooper G.M."/>
            <person name="Batzoglou S."/>
            <person name="Brudno M."/>
            <person name="Sidow A."/>
            <person name="Stone E.A."/>
            <person name="Payseur B.A."/>
            <person name="Bourque G."/>
            <person name="Lopez-Otin C."/>
            <person name="Puente X.S."/>
            <person name="Chakrabarti K."/>
            <person name="Chatterji S."/>
            <person name="Dewey C."/>
            <person name="Pachter L."/>
            <person name="Bray N."/>
            <person name="Yap V.B."/>
            <person name="Caspi A."/>
            <person name="Tesler G."/>
            <person name="Pevzner P.A."/>
            <person name="Haussler D."/>
            <person name="Roskin K.M."/>
            <person name="Baertsch R."/>
            <person name="Clawson H."/>
            <person name="Furey T.S."/>
            <person name="Hinrichs A.S."/>
            <person name="Karolchik D."/>
            <person name="Kent W.J."/>
            <person name="Rosenbloom K.R."/>
            <person name="Trumbower H."/>
            <person name="Weirauch M."/>
            <person name="Cooper D.N."/>
            <person name="Stenson P.D."/>
            <person name="Ma B."/>
            <person name="Brent M."/>
            <person name="Arumugam M."/>
            <person name="Shteynberg D."/>
            <person name="Copley R.R."/>
            <person name="Taylor M.S."/>
            <person name="Riethman H."/>
            <person name="Mudunuri U."/>
            <person name="Peterson J."/>
            <person name="Guyer M."/>
            <person name="Felsenfeld A."/>
            <person name="Old S."/>
            <person name="Mockrin S."/>
            <person name="Collins F.S."/>
        </authorList>
    </citation>
    <scope>NUCLEOTIDE SEQUENCE [LARGE SCALE GENOMIC DNA]</scope>
    <source>
        <strain>Brown Norway</strain>
    </source>
</reference>
<reference key="2">
    <citation type="journal article" date="2006" name="J. Proteome Res.">
        <title>Analysis of the cGMP/cAMP interactome using a chemical proteomics approach in mammalian heart tissue validates sphingosine kinase type 1-interacting protein as a genuine and highly abundant AKAP.</title>
        <authorList>
            <person name="Scholten A."/>
            <person name="Poh M.K."/>
            <person name="van Veen T.A.B."/>
            <person name="van Breukelen B."/>
            <person name="Vos M.A."/>
            <person name="Heck A.J.R."/>
        </authorList>
    </citation>
    <scope>IDENTIFICATION BY MASS SPECTROMETRY</scope>
    <scope>TISSUE SPECIFICITY</scope>
    <scope>POSSIBLE FUNCTION</scope>
</reference>
<reference key="3">
    <citation type="journal article" date="2012" name="Nat. Commun.">
        <title>Quantitative maps of protein phosphorylation sites across 14 different rat organs and tissues.</title>
        <authorList>
            <person name="Lundby A."/>
            <person name="Secher A."/>
            <person name="Lage K."/>
            <person name="Nordsborg N.B."/>
            <person name="Dmytriyev A."/>
            <person name="Lundby C."/>
            <person name="Olsen J.V."/>
        </authorList>
    </citation>
    <scope>IDENTIFICATION BY MASS SPECTROMETRY [LARGE SCALE ANALYSIS]</scope>
</reference>
<protein>
    <recommendedName>
        <fullName>A-kinase anchor protein SPHKAP</fullName>
    </recommendedName>
    <alternativeName>
        <fullName>SPHK1-interactor and AKAP domain-containing protein</fullName>
    </alternativeName>
    <alternativeName>
        <fullName>Sphingosine kinase type 1-interacting protein</fullName>
    </alternativeName>
</protein>
<comment type="function">
    <text evidence="1">Anchoring protein that binds preferentially to the type I regulatory subunit of c-AMP-dependent protein kinase (PKA type I) and targets it to distinct subcellular compartments. May act as a converging factor linking cAMP and sphingosine signaling pathways. Plays a regulatory role in the modulation of SPHK1 (By similarity).</text>
</comment>
<comment type="subunit">
    <text evidence="1">Interacts (via the PKA-RII subunit binding domain) with the RI subunit of PKA. Interacts with SPHK1; the interaction greatly reduces SPHK1 activity (By similarity).</text>
</comment>
<comment type="subcellular location">
    <subcellularLocation>
        <location evidence="1">Cytoplasm</location>
    </subcellularLocation>
    <text evidence="1">Colocalizes with SPHK1 in the cytoplasm.</text>
</comment>
<comment type="tissue specificity">
    <text evidence="4">Abundant in heart ventricle (at protein level).</text>
</comment>
<comment type="domain">
    <text evidence="1">RII-binding site, predicted to form an amphipathic helix, could participate in protein-protein interactions with a complementary surface on the R-subunit dimer.</text>
</comment>
<comment type="similarity">
    <text evidence="5">Belongs to the AKAP110 family.</text>
</comment>
<proteinExistence type="evidence at protein level"/>
<evidence type="ECO:0000250" key="1"/>
<evidence type="ECO:0000250" key="2">
    <source>
        <dbReference type="UniProtKB" id="Q6NSW3"/>
    </source>
</evidence>
<evidence type="ECO:0000256" key="3">
    <source>
        <dbReference type="SAM" id="MobiDB-lite"/>
    </source>
</evidence>
<evidence type="ECO:0000269" key="4">
    <source>
    </source>
</evidence>
<evidence type="ECO:0000305" key="5"/>
<organism>
    <name type="scientific">Rattus norvegicus</name>
    <name type="common">Rat</name>
    <dbReference type="NCBI Taxonomy" id="10116"/>
    <lineage>
        <taxon>Eukaryota</taxon>
        <taxon>Metazoa</taxon>
        <taxon>Chordata</taxon>
        <taxon>Craniata</taxon>
        <taxon>Vertebrata</taxon>
        <taxon>Euteleostomi</taxon>
        <taxon>Mammalia</taxon>
        <taxon>Eutheria</taxon>
        <taxon>Euarchontoglires</taxon>
        <taxon>Glires</taxon>
        <taxon>Rodentia</taxon>
        <taxon>Myomorpha</taxon>
        <taxon>Muroidea</taxon>
        <taxon>Muridae</taxon>
        <taxon>Murinae</taxon>
        <taxon>Rattus</taxon>
    </lineage>
</organism>
<keyword id="KW-0963">Cytoplasm</keyword>
<keyword id="KW-0597">Phosphoprotein</keyword>
<keyword id="KW-1185">Reference proteome</keyword>
<accession>P0C6C0</accession>
<gene>
    <name type="primary">Sphkap</name>
    <name type="synonym">Skip</name>
</gene>
<name>SPKAP_RAT</name>
<feature type="chain" id="PRO_0000320668" description="A-kinase anchor protein SPHKAP">
    <location>
        <begin position="1"/>
        <end position="1683"/>
    </location>
</feature>
<feature type="region of interest" description="Disordered" evidence="3">
    <location>
        <begin position="1"/>
        <end position="30"/>
    </location>
</feature>
<feature type="region of interest" description="Disordered" evidence="3">
    <location>
        <begin position="275"/>
        <end position="320"/>
    </location>
</feature>
<feature type="region of interest" description="Disordered" evidence="3">
    <location>
        <begin position="582"/>
        <end position="601"/>
    </location>
</feature>
<feature type="region of interest" description="PKA-RII subunit binding domain" evidence="1">
    <location>
        <begin position="910"/>
        <end position="927"/>
    </location>
</feature>
<feature type="region of interest" description="Disordered" evidence="3">
    <location>
        <begin position="960"/>
        <end position="983"/>
    </location>
</feature>
<feature type="region of interest" description="Disordered" evidence="3">
    <location>
        <begin position="1359"/>
        <end position="1387"/>
    </location>
</feature>
<feature type="region of interest" description="Disordered" evidence="3">
    <location>
        <begin position="1415"/>
        <end position="1518"/>
    </location>
</feature>
<feature type="compositionally biased region" description="Polar residues" evidence="3">
    <location>
        <begin position="1"/>
        <end position="14"/>
    </location>
</feature>
<feature type="compositionally biased region" description="Polar residues" evidence="3">
    <location>
        <begin position="289"/>
        <end position="301"/>
    </location>
</feature>
<feature type="compositionally biased region" description="Polar residues" evidence="3">
    <location>
        <begin position="1362"/>
        <end position="1371"/>
    </location>
</feature>
<feature type="compositionally biased region" description="Basic and acidic residues" evidence="3">
    <location>
        <begin position="1469"/>
        <end position="1490"/>
    </location>
</feature>
<feature type="compositionally biased region" description="Low complexity" evidence="3">
    <location>
        <begin position="1492"/>
        <end position="1504"/>
    </location>
</feature>
<feature type="modified residue" description="Phosphoserine" evidence="2">
    <location>
        <position position="1006"/>
    </location>
</feature>
<feature type="modified residue" description="Phosphoserine" evidence="2">
    <location>
        <position position="1066"/>
    </location>
</feature>
<feature type="modified residue" description="Phosphoserine" evidence="2">
    <location>
        <position position="1088"/>
    </location>
</feature>
<feature type="modified residue" description="Phosphoserine" evidence="2">
    <location>
        <position position="1101"/>
    </location>
</feature>
<feature type="modified residue" description="Phosphoserine" evidence="2">
    <location>
        <position position="1102"/>
    </location>
</feature>
<feature type="modified residue" description="Phosphoserine" evidence="2">
    <location>
        <position position="1105"/>
    </location>
</feature>
<feature type="modified residue" description="Phosphoserine" evidence="2">
    <location>
        <position position="1240"/>
    </location>
</feature>
<feature type="modified residue" description="Phosphoserine" evidence="2">
    <location>
        <position position="1269"/>
    </location>
</feature>